<keyword id="KW-0687">Ribonucleoprotein</keyword>
<keyword id="KW-0689">Ribosomal protein</keyword>
<keyword id="KW-0694">RNA-binding</keyword>
<keyword id="KW-0699">rRNA-binding</keyword>
<reference key="1">
    <citation type="journal article" date="2004" name="PLoS Biol.">
        <title>Phylogenomics of the reproductive parasite Wolbachia pipientis wMel: a streamlined genome overrun by mobile genetic elements.</title>
        <authorList>
            <person name="Wu M."/>
            <person name="Sun L.V."/>
            <person name="Vamathevan J.J."/>
            <person name="Riegler M."/>
            <person name="DeBoy R.T."/>
            <person name="Brownlie J.C."/>
            <person name="McGraw E.A."/>
            <person name="Martin W."/>
            <person name="Esser C."/>
            <person name="Ahmadinejad N."/>
            <person name="Wiegand C."/>
            <person name="Madupu R."/>
            <person name="Beanan M.J."/>
            <person name="Brinkac L.M."/>
            <person name="Daugherty S.C."/>
            <person name="Durkin A.S."/>
            <person name="Kolonay J.F."/>
            <person name="Nelson W.C."/>
            <person name="Mohamoud Y."/>
            <person name="Lee P."/>
            <person name="Berry K.J."/>
            <person name="Young M.B."/>
            <person name="Utterback T.R."/>
            <person name="Weidman J.F."/>
            <person name="Nierman W.C."/>
            <person name="Paulsen I.T."/>
            <person name="Nelson K.E."/>
            <person name="Tettelin H."/>
            <person name="O'Neill S.L."/>
            <person name="Eisen J.A."/>
        </authorList>
    </citation>
    <scope>NUCLEOTIDE SEQUENCE [LARGE SCALE GENOMIC DNA]</scope>
</reference>
<evidence type="ECO:0000255" key="1">
    <source>
        <dbReference type="HAMAP-Rule" id="MF_01306"/>
    </source>
</evidence>
<evidence type="ECO:0000305" key="2"/>
<proteinExistence type="inferred from homology"/>
<feature type="chain" id="PRO_0000293395" description="Small ribosomal subunit protein uS4">
    <location>
        <begin position="1"/>
        <end position="204"/>
    </location>
</feature>
<feature type="domain" description="S4 RNA-binding" evidence="1">
    <location>
        <begin position="93"/>
        <end position="156"/>
    </location>
</feature>
<accession>Q73HZ8</accession>
<sequence>MTTVITRKYRISRRLGVNLWGRAKDPVNKRKYPPGQHGILGFKKLSDFGKQFAAHKKFKFYYAISSKQLRRTFLDAYNRKGYTADNFIGILESRLSSVLYHSGLVPTIYSAKQLISHKHVTVNDKVVNISSYRVKPGDIIKIRERAAKIPVVVEAEQKQERKAPDYLEADSKEHSVKYLRSPQYSEVPYSADMEVNLVVEFYSR</sequence>
<organism>
    <name type="scientific">Wolbachia pipientis wMel</name>
    <dbReference type="NCBI Taxonomy" id="163164"/>
    <lineage>
        <taxon>Bacteria</taxon>
        <taxon>Pseudomonadati</taxon>
        <taxon>Pseudomonadota</taxon>
        <taxon>Alphaproteobacteria</taxon>
        <taxon>Rickettsiales</taxon>
        <taxon>Anaplasmataceae</taxon>
        <taxon>Wolbachieae</taxon>
        <taxon>Wolbachia</taxon>
    </lineage>
</organism>
<name>RS4_WOLPM</name>
<protein>
    <recommendedName>
        <fullName evidence="1">Small ribosomal subunit protein uS4</fullName>
    </recommendedName>
    <alternativeName>
        <fullName evidence="2">30S ribosomal protein S4</fullName>
    </alternativeName>
</protein>
<dbReference type="EMBL" id="AE017196">
    <property type="protein sequence ID" value="AAS14114.1"/>
    <property type="molecule type" value="Genomic_DNA"/>
</dbReference>
<dbReference type="RefSeq" id="WP_010962555.1">
    <property type="nucleotide sequence ID" value="NZ_OX384529.1"/>
</dbReference>
<dbReference type="SMR" id="Q73HZ8"/>
<dbReference type="EnsemblBacteria" id="AAS14114">
    <property type="protein sequence ID" value="AAS14114"/>
    <property type="gene ID" value="WD_0388"/>
</dbReference>
<dbReference type="GeneID" id="70035882"/>
<dbReference type="KEGG" id="wol:WD_0388"/>
<dbReference type="eggNOG" id="COG0522">
    <property type="taxonomic scope" value="Bacteria"/>
</dbReference>
<dbReference type="Proteomes" id="UP000008215">
    <property type="component" value="Chromosome"/>
</dbReference>
<dbReference type="GO" id="GO:0015935">
    <property type="term" value="C:small ribosomal subunit"/>
    <property type="evidence" value="ECO:0007669"/>
    <property type="project" value="InterPro"/>
</dbReference>
<dbReference type="GO" id="GO:0019843">
    <property type="term" value="F:rRNA binding"/>
    <property type="evidence" value="ECO:0007669"/>
    <property type="project" value="UniProtKB-UniRule"/>
</dbReference>
<dbReference type="GO" id="GO:0003735">
    <property type="term" value="F:structural constituent of ribosome"/>
    <property type="evidence" value="ECO:0007669"/>
    <property type="project" value="InterPro"/>
</dbReference>
<dbReference type="GO" id="GO:0042274">
    <property type="term" value="P:ribosomal small subunit biogenesis"/>
    <property type="evidence" value="ECO:0007669"/>
    <property type="project" value="TreeGrafter"/>
</dbReference>
<dbReference type="GO" id="GO:0006412">
    <property type="term" value="P:translation"/>
    <property type="evidence" value="ECO:0007669"/>
    <property type="project" value="UniProtKB-UniRule"/>
</dbReference>
<dbReference type="CDD" id="cd00165">
    <property type="entry name" value="S4"/>
    <property type="match status" value="1"/>
</dbReference>
<dbReference type="FunFam" id="3.10.290.10:FF:000001">
    <property type="entry name" value="30S ribosomal protein S4"/>
    <property type="match status" value="1"/>
</dbReference>
<dbReference type="Gene3D" id="1.10.1050.10">
    <property type="entry name" value="Ribosomal Protein S4 Delta 41, Chain A, domain 1"/>
    <property type="match status" value="1"/>
</dbReference>
<dbReference type="Gene3D" id="3.10.290.10">
    <property type="entry name" value="RNA-binding S4 domain"/>
    <property type="match status" value="1"/>
</dbReference>
<dbReference type="HAMAP" id="MF_01306_B">
    <property type="entry name" value="Ribosomal_uS4_B"/>
    <property type="match status" value="1"/>
</dbReference>
<dbReference type="InterPro" id="IPR022801">
    <property type="entry name" value="Ribosomal_uS4"/>
</dbReference>
<dbReference type="InterPro" id="IPR005709">
    <property type="entry name" value="Ribosomal_uS4_bac-type"/>
</dbReference>
<dbReference type="InterPro" id="IPR001912">
    <property type="entry name" value="Ribosomal_uS4_N"/>
</dbReference>
<dbReference type="InterPro" id="IPR002942">
    <property type="entry name" value="S4_RNA-bd"/>
</dbReference>
<dbReference type="InterPro" id="IPR036986">
    <property type="entry name" value="S4_RNA-bd_sf"/>
</dbReference>
<dbReference type="NCBIfam" id="NF003717">
    <property type="entry name" value="PRK05327.1"/>
    <property type="match status" value="1"/>
</dbReference>
<dbReference type="NCBIfam" id="TIGR01017">
    <property type="entry name" value="rpsD_bact"/>
    <property type="match status" value="1"/>
</dbReference>
<dbReference type="PANTHER" id="PTHR11831">
    <property type="entry name" value="30S 40S RIBOSOMAL PROTEIN"/>
    <property type="match status" value="1"/>
</dbReference>
<dbReference type="PANTHER" id="PTHR11831:SF4">
    <property type="entry name" value="SMALL RIBOSOMAL SUBUNIT PROTEIN US4M"/>
    <property type="match status" value="1"/>
</dbReference>
<dbReference type="Pfam" id="PF00163">
    <property type="entry name" value="Ribosomal_S4"/>
    <property type="match status" value="1"/>
</dbReference>
<dbReference type="Pfam" id="PF01479">
    <property type="entry name" value="S4"/>
    <property type="match status" value="1"/>
</dbReference>
<dbReference type="SMART" id="SM01390">
    <property type="entry name" value="Ribosomal_S4"/>
    <property type="match status" value="1"/>
</dbReference>
<dbReference type="SMART" id="SM00363">
    <property type="entry name" value="S4"/>
    <property type="match status" value="1"/>
</dbReference>
<dbReference type="SUPFAM" id="SSF55174">
    <property type="entry name" value="Alpha-L RNA-binding motif"/>
    <property type="match status" value="1"/>
</dbReference>
<dbReference type="PROSITE" id="PS50889">
    <property type="entry name" value="S4"/>
    <property type="match status" value="1"/>
</dbReference>
<gene>
    <name evidence="1" type="primary">rpsD</name>
    <name type="ordered locus">WD_0388</name>
</gene>
<comment type="function">
    <text evidence="1">One of the primary rRNA binding proteins, it binds directly to 16S rRNA where it nucleates assembly of the body of the 30S subunit.</text>
</comment>
<comment type="function">
    <text evidence="1">With S5 and S12 plays an important role in translational accuracy.</text>
</comment>
<comment type="subunit">
    <text evidence="1">Part of the 30S ribosomal subunit. Contacts protein S5. The interaction surface between S4 and S5 is involved in control of translational fidelity.</text>
</comment>
<comment type="similarity">
    <text evidence="1">Belongs to the universal ribosomal protein uS4 family.</text>
</comment>